<gene>
    <name evidence="1" type="primary">nadE</name>
    <name type="ordered locus">PP_4869</name>
</gene>
<protein>
    <recommendedName>
        <fullName evidence="1">NH(3)-dependent NAD(+) synthetase</fullName>
        <ecNumber evidence="1">6.3.1.5</ecNumber>
    </recommendedName>
</protein>
<comment type="function">
    <text evidence="1">Catalyzes the ATP-dependent amidation of deamido-NAD to form NAD. Uses ammonia as a nitrogen source.</text>
</comment>
<comment type="catalytic activity">
    <reaction evidence="1">
        <text>deamido-NAD(+) + NH4(+) + ATP = AMP + diphosphate + NAD(+) + H(+)</text>
        <dbReference type="Rhea" id="RHEA:21188"/>
        <dbReference type="ChEBI" id="CHEBI:15378"/>
        <dbReference type="ChEBI" id="CHEBI:28938"/>
        <dbReference type="ChEBI" id="CHEBI:30616"/>
        <dbReference type="ChEBI" id="CHEBI:33019"/>
        <dbReference type="ChEBI" id="CHEBI:57540"/>
        <dbReference type="ChEBI" id="CHEBI:58437"/>
        <dbReference type="ChEBI" id="CHEBI:456215"/>
        <dbReference type="EC" id="6.3.1.5"/>
    </reaction>
</comment>
<comment type="pathway">
    <text evidence="1">Cofactor biosynthesis; NAD(+) biosynthesis; NAD(+) from deamido-NAD(+) (ammonia route): step 1/1.</text>
</comment>
<comment type="subunit">
    <text evidence="1">Homodimer.</text>
</comment>
<comment type="similarity">
    <text evidence="1">Belongs to the NAD synthetase family.</text>
</comment>
<accession>Q88DF6</accession>
<organism>
    <name type="scientific">Pseudomonas putida (strain ATCC 47054 / DSM 6125 / CFBP 8728 / NCIMB 11950 / KT2440)</name>
    <dbReference type="NCBI Taxonomy" id="160488"/>
    <lineage>
        <taxon>Bacteria</taxon>
        <taxon>Pseudomonadati</taxon>
        <taxon>Pseudomonadota</taxon>
        <taxon>Gammaproteobacteria</taxon>
        <taxon>Pseudomonadales</taxon>
        <taxon>Pseudomonadaceae</taxon>
        <taxon>Pseudomonas</taxon>
    </lineage>
</organism>
<keyword id="KW-0067">ATP-binding</keyword>
<keyword id="KW-0436">Ligase</keyword>
<keyword id="KW-0460">Magnesium</keyword>
<keyword id="KW-0479">Metal-binding</keyword>
<keyword id="KW-0520">NAD</keyword>
<keyword id="KW-0547">Nucleotide-binding</keyword>
<keyword id="KW-1185">Reference proteome</keyword>
<feature type="chain" id="PRO_0000152186" description="NH(3)-dependent NAD(+) synthetase">
    <location>
        <begin position="1"/>
        <end position="275"/>
    </location>
</feature>
<feature type="binding site" evidence="1">
    <location>
        <begin position="50"/>
        <end position="57"/>
    </location>
    <ligand>
        <name>ATP</name>
        <dbReference type="ChEBI" id="CHEBI:30616"/>
    </ligand>
</feature>
<feature type="binding site" evidence="1">
    <location>
        <position position="56"/>
    </location>
    <ligand>
        <name>Mg(2+)</name>
        <dbReference type="ChEBI" id="CHEBI:18420"/>
    </ligand>
</feature>
<feature type="binding site" evidence="1">
    <location>
        <position position="147"/>
    </location>
    <ligand>
        <name>deamido-NAD(+)</name>
        <dbReference type="ChEBI" id="CHEBI:58437"/>
    </ligand>
</feature>
<feature type="binding site" evidence="1">
    <location>
        <position position="167"/>
    </location>
    <ligand>
        <name>ATP</name>
        <dbReference type="ChEBI" id="CHEBI:30616"/>
    </ligand>
</feature>
<feature type="binding site" evidence="1">
    <location>
        <position position="172"/>
    </location>
    <ligand>
        <name>Mg(2+)</name>
        <dbReference type="ChEBI" id="CHEBI:18420"/>
    </ligand>
</feature>
<feature type="binding site" evidence="1">
    <location>
        <position position="180"/>
    </location>
    <ligand>
        <name>deamido-NAD(+)</name>
        <dbReference type="ChEBI" id="CHEBI:58437"/>
    </ligand>
</feature>
<feature type="binding site" evidence="1">
    <location>
        <position position="187"/>
    </location>
    <ligand>
        <name>deamido-NAD(+)</name>
        <dbReference type="ChEBI" id="CHEBI:58437"/>
    </ligand>
</feature>
<feature type="binding site" evidence="1">
    <location>
        <position position="196"/>
    </location>
    <ligand>
        <name>ATP</name>
        <dbReference type="ChEBI" id="CHEBI:30616"/>
    </ligand>
</feature>
<feature type="binding site" evidence="1">
    <location>
        <position position="218"/>
    </location>
    <ligand>
        <name>ATP</name>
        <dbReference type="ChEBI" id="CHEBI:30616"/>
    </ligand>
</feature>
<feature type="binding site" evidence="1">
    <location>
        <begin position="267"/>
        <end position="268"/>
    </location>
    <ligand>
        <name>deamido-NAD(+)</name>
        <dbReference type="ChEBI" id="CHEBI:58437"/>
    </ligand>
</feature>
<reference key="1">
    <citation type="journal article" date="2002" name="Environ. Microbiol.">
        <title>Complete genome sequence and comparative analysis of the metabolically versatile Pseudomonas putida KT2440.</title>
        <authorList>
            <person name="Nelson K.E."/>
            <person name="Weinel C."/>
            <person name="Paulsen I.T."/>
            <person name="Dodson R.J."/>
            <person name="Hilbert H."/>
            <person name="Martins dos Santos V.A.P."/>
            <person name="Fouts D.E."/>
            <person name="Gill S.R."/>
            <person name="Pop M."/>
            <person name="Holmes M."/>
            <person name="Brinkac L.M."/>
            <person name="Beanan M.J."/>
            <person name="DeBoy R.T."/>
            <person name="Daugherty S.C."/>
            <person name="Kolonay J.F."/>
            <person name="Madupu R."/>
            <person name="Nelson W.C."/>
            <person name="White O."/>
            <person name="Peterson J.D."/>
            <person name="Khouri H.M."/>
            <person name="Hance I."/>
            <person name="Chris Lee P."/>
            <person name="Holtzapple E.K."/>
            <person name="Scanlan D."/>
            <person name="Tran K."/>
            <person name="Moazzez A."/>
            <person name="Utterback T.R."/>
            <person name="Rizzo M."/>
            <person name="Lee K."/>
            <person name="Kosack D."/>
            <person name="Moestl D."/>
            <person name="Wedler H."/>
            <person name="Lauber J."/>
            <person name="Stjepandic D."/>
            <person name="Hoheisel J."/>
            <person name="Straetz M."/>
            <person name="Heim S."/>
            <person name="Kiewitz C."/>
            <person name="Eisen J.A."/>
            <person name="Timmis K.N."/>
            <person name="Duesterhoeft A."/>
            <person name="Tuemmler B."/>
            <person name="Fraser C.M."/>
        </authorList>
    </citation>
    <scope>NUCLEOTIDE SEQUENCE [LARGE SCALE GENOMIC DNA]</scope>
    <source>
        <strain>ATCC 47054 / DSM 6125 / CFBP 8728 / NCIMB 11950 / KT2440</strain>
    </source>
</reference>
<dbReference type="EC" id="6.3.1.5" evidence="1"/>
<dbReference type="EMBL" id="AE015451">
    <property type="protein sequence ID" value="AAN70438.1"/>
    <property type="molecule type" value="Genomic_DNA"/>
</dbReference>
<dbReference type="RefSeq" id="NP_746974.1">
    <property type="nucleotide sequence ID" value="NC_002947.4"/>
</dbReference>
<dbReference type="RefSeq" id="WP_010955469.1">
    <property type="nucleotide sequence ID" value="NZ_CP169744.1"/>
</dbReference>
<dbReference type="SMR" id="Q88DF6"/>
<dbReference type="STRING" id="160488.PP_4869"/>
<dbReference type="PaxDb" id="160488-PP_4869"/>
<dbReference type="GeneID" id="83682599"/>
<dbReference type="KEGG" id="ppu:PP_4869"/>
<dbReference type="PATRIC" id="fig|160488.4.peg.5201"/>
<dbReference type="eggNOG" id="COG0171">
    <property type="taxonomic scope" value="Bacteria"/>
</dbReference>
<dbReference type="HOGENOM" id="CLU_059327_3_0_6"/>
<dbReference type="OrthoDB" id="3266517at2"/>
<dbReference type="PhylomeDB" id="Q88DF6"/>
<dbReference type="BioCyc" id="PPUT160488:G1G01-5209-MONOMER"/>
<dbReference type="UniPathway" id="UPA00253">
    <property type="reaction ID" value="UER00333"/>
</dbReference>
<dbReference type="Proteomes" id="UP000000556">
    <property type="component" value="Chromosome"/>
</dbReference>
<dbReference type="GO" id="GO:0005737">
    <property type="term" value="C:cytoplasm"/>
    <property type="evidence" value="ECO:0007669"/>
    <property type="project" value="InterPro"/>
</dbReference>
<dbReference type="GO" id="GO:0005524">
    <property type="term" value="F:ATP binding"/>
    <property type="evidence" value="ECO:0007669"/>
    <property type="project" value="UniProtKB-UniRule"/>
</dbReference>
<dbReference type="GO" id="GO:0004359">
    <property type="term" value="F:glutaminase activity"/>
    <property type="evidence" value="ECO:0007669"/>
    <property type="project" value="InterPro"/>
</dbReference>
<dbReference type="GO" id="GO:0046872">
    <property type="term" value="F:metal ion binding"/>
    <property type="evidence" value="ECO:0007669"/>
    <property type="project" value="UniProtKB-KW"/>
</dbReference>
<dbReference type="GO" id="GO:0003952">
    <property type="term" value="F:NAD+ synthase (glutamine-hydrolyzing) activity"/>
    <property type="evidence" value="ECO:0007669"/>
    <property type="project" value="InterPro"/>
</dbReference>
<dbReference type="GO" id="GO:0008795">
    <property type="term" value="F:NAD+ synthase activity"/>
    <property type="evidence" value="ECO:0007669"/>
    <property type="project" value="UniProtKB-UniRule"/>
</dbReference>
<dbReference type="GO" id="GO:0009435">
    <property type="term" value="P:NAD biosynthetic process"/>
    <property type="evidence" value="ECO:0007669"/>
    <property type="project" value="UniProtKB-UniRule"/>
</dbReference>
<dbReference type="CDD" id="cd00553">
    <property type="entry name" value="NAD_synthase"/>
    <property type="match status" value="1"/>
</dbReference>
<dbReference type="Gene3D" id="3.40.50.620">
    <property type="entry name" value="HUPs"/>
    <property type="match status" value="1"/>
</dbReference>
<dbReference type="HAMAP" id="MF_00193">
    <property type="entry name" value="NadE_ammonia_dep"/>
    <property type="match status" value="1"/>
</dbReference>
<dbReference type="InterPro" id="IPR022310">
    <property type="entry name" value="NAD/GMP_synthase"/>
</dbReference>
<dbReference type="InterPro" id="IPR003694">
    <property type="entry name" value="NAD_synthase"/>
</dbReference>
<dbReference type="InterPro" id="IPR022926">
    <property type="entry name" value="NH(3)-dep_NAD(+)_synth"/>
</dbReference>
<dbReference type="InterPro" id="IPR014729">
    <property type="entry name" value="Rossmann-like_a/b/a_fold"/>
</dbReference>
<dbReference type="NCBIfam" id="TIGR00552">
    <property type="entry name" value="nadE"/>
    <property type="match status" value="1"/>
</dbReference>
<dbReference type="NCBIfam" id="NF001979">
    <property type="entry name" value="PRK00768.1"/>
    <property type="match status" value="1"/>
</dbReference>
<dbReference type="PANTHER" id="PTHR23090">
    <property type="entry name" value="NH 3 /GLUTAMINE-DEPENDENT NAD + SYNTHETASE"/>
    <property type="match status" value="1"/>
</dbReference>
<dbReference type="PANTHER" id="PTHR23090:SF7">
    <property type="entry name" value="NH(3)-DEPENDENT NAD(+) SYNTHETASE"/>
    <property type="match status" value="1"/>
</dbReference>
<dbReference type="Pfam" id="PF02540">
    <property type="entry name" value="NAD_synthase"/>
    <property type="match status" value="1"/>
</dbReference>
<dbReference type="SUPFAM" id="SSF52402">
    <property type="entry name" value="Adenine nucleotide alpha hydrolases-like"/>
    <property type="match status" value="1"/>
</dbReference>
<evidence type="ECO:0000255" key="1">
    <source>
        <dbReference type="HAMAP-Rule" id="MF_00193"/>
    </source>
</evidence>
<sequence length="275" mass="29273">MQAVQQEIAQALKVQPPFADAAALEAEVARRVAFIKDCLANARLKTLVLGISGGVDSLTAALLAQRAINELRAETGDKAYTFIAVRLPYQVQHDEHDAQACLEVIKADEVHTVDIAPAVRALAAEVAALKNGSPTLVDFVVGNVKARTRMVAQYTIAGARAGLVIGTDHAAEAVMGFFTKFGDGACDLAPLSGLVKNQVRAIARSFGAPESLVEKVPTADLEDLEPGKPDEASHGVTYAQIDAFLHGQPVDQAAFDIIVATYRKTQHKRELPFAP</sequence>
<proteinExistence type="inferred from homology"/>
<name>NADE_PSEPK</name>